<name>FOG1_XENLA</name>
<keyword id="KW-0010">Activator</keyword>
<keyword id="KW-0238">DNA-binding</keyword>
<keyword id="KW-0479">Metal-binding</keyword>
<keyword id="KW-0539">Nucleus</keyword>
<keyword id="KW-1185">Reference proteome</keyword>
<keyword id="KW-0677">Repeat</keyword>
<keyword id="KW-0678">Repressor</keyword>
<keyword id="KW-0804">Transcription</keyword>
<keyword id="KW-0805">Transcription regulation</keyword>
<keyword id="KW-0862">Zinc</keyword>
<keyword id="KW-0863">Zinc-finger</keyword>
<accession>Q9I9K0</accession>
<feature type="chain" id="PRO_0000221046" description="Zinc finger protein ZFPM1">
    <location>
        <begin position="1" status="less than"/>
        <end position="1061"/>
    </location>
</feature>
<feature type="zinc finger region" description="CCHC FOG-type 1" evidence="3">
    <location>
        <begin position="152"/>
        <end position="185"/>
    </location>
</feature>
<feature type="zinc finger region" description="C2H2-type 1" evidence="2">
    <location>
        <begin position="204"/>
        <end position="228"/>
    </location>
</feature>
<feature type="zinc finger region" description="C2H2-type 2" evidence="2">
    <location>
        <begin position="234"/>
        <end position="256"/>
    </location>
</feature>
<feature type="zinc finger region" description="C2H2-type 3" evidence="2">
    <location>
        <begin position="262"/>
        <end position="285"/>
    </location>
</feature>
<feature type="zinc finger region" description="CCHC FOG-type 2" evidence="3">
    <location>
        <begin position="508"/>
        <end position="541"/>
    </location>
</feature>
<feature type="zinc finger region" description="CCHC FOG-type 3" evidence="3">
    <location>
        <begin position="623"/>
        <end position="656"/>
    </location>
</feature>
<feature type="zinc finger region" description="CCHC FOG-type 4" evidence="3">
    <location>
        <begin position="759"/>
        <end position="792"/>
    </location>
</feature>
<feature type="zinc finger region" description="C2H2-type 4" evidence="2">
    <location>
        <begin position="869"/>
        <end position="892"/>
    </location>
</feature>
<feature type="zinc finger region" description="CCHC FOG-type 5" evidence="3">
    <location>
        <begin position="1023"/>
        <end position="1056"/>
    </location>
</feature>
<feature type="region of interest" description="Disordered" evidence="4">
    <location>
        <begin position="349"/>
        <end position="393"/>
    </location>
</feature>
<feature type="region of interest" description="Disordered" evidence="4">
    <location>
        <begin position="435"/>
        <end position="455"/>
    </location>
</feature>
<feature type="region of interest" description="Disordered" evidence="4">
    <location>
        <begin position="561"/>
        <end position="586"/>
    </location>
</feature>
<feature type="region of interest" description="Disordered" evidence="4">
    <location>
        <begin position="599"/>
        <end position="630"/>
    </location>
</feature>
<feature type="region of interest" description="Disordered" evidence="4">
    <location>
        <begin position="661"/>
        <end position="681"/>
    </location>
</feature>
<feature type="region of interest" description="Interaction with CTBP" evidence="1">
    <location>
        <begin position="736"/>
        <end position="742"/>
    </location>
</feature>
<feature type="region of interest" description="Disordered" evidence="4">
    <location>
        <begin position="917"/>
        <end position="1021"/>
    </location>
</feature>
<feature type="compositionally biased region" description="Low complexity" evidence="4">
    <location>
        <begin position="378"/>
        <end position="388"/>
    </location>
</feature>
<feature type="compositionally biased region" description="Polar residues" evidence="4">
    <location>
        <begin position="436"/>
        <end position="448"/>
    </location>
</feature>
<feature type="compositionally biased region" description="Polar residues" evidence="4">
    <location>
        <begin position="565"/>
        <end position="574"/>
    </location>
</feature>
<feature type="compositionally biased region" description="Low complexity" evidence="4">
    <location>
        <begin position="933"/>
        <end position="942"/>
    </location>
</feature>
<feature type="compositionally biased region" description="Low complexity" evidence="4">
    <location>
        <begin position="954"/>
        <end position="972"/>
    </location>
</feature>
<feature type="compositionally biased region" description="Pro residues" evidence="4">
    <location>
        <begin position="973"/>
        <end position="984"/>
    </location>
</feature>
<feature type="binding site" evidence="3">
    <location>
        <position position="160"/>
    </location>
    <ligand>
        <name>Zn(2+)</name>
        <dbReference type="ChEBI" id="CHEBI:29105"/>
        <label>1</label>
    </ligand>
</feature>
<feature type="binding site" evidence="3">
    <location>
        <position position="163"/>
    </location>
    <ligand>
        <name>Zn(2+)</name>
        <dbReference type="ChEBI" id="CHEBI:29105"/>
        <label>1</label>
    </ligand>
</feature>
<feature type="binding site" evidence="3">
    <location>
        <position position="176"/>
    </location>
    <ligand>
        <name>Zn(2+)</name>
        <dbReference type="ChEBI" id="CHEBI:29105"/>
        <label>1</label>
    </ligand>
</feature>
<feature type="binding site" evidence="3">
    <location>
        <position position="181"/>
    </location>
    <ligand>
        <name>Zn(2+)</name>
        <dbReference type="ChEBI" id="CHEBI:29105"/>
        <label>1</label>
    </ligand>
</feature>
<feature type="binding site" evidence="3">
    <location>
        <position position="516"/>
    </location>
    <ligand>
        <name>Zn(2+)</name>
        <dbReference type="ChEBI" id="CHEBI:29105"/>
        <label>2</label>
    </ligand>
</feature>
<feature type="binding site" evidence="3">
    <location>
        <position position="519"/>
    </location>
    <ligand>
        <name>Zn(2+)</name>
        <dbReference type="ChEBI" id="CHEBI:29105"/>
        <label>2</label>
    </ligand>
</feature>
<feature type="binding site" evidence="3">
    <location>
        <position position="532"/>
    </location>
    <ligand>
        <name>Zn(2+)</name>
        <dbReference type="ChEBI" id="CHEBI:29105"/>
        <label>2</label>
    </ligand>
</feature>
<feature type="binding site" evidence="3">
    <location>
        <position position="537"/>
    </location>
    <ligand>
        <name>Zn(2+)</name>
        <dbReference type="ChEBI" id="CHEBI:29105"/>
        <label>2</label>
    </ligand>
</feature>
<feature type="binding site" evidence="3">
    <location>
        <position position="631"/>
    </location>
    <ligand>
        <name>Zn(2+)</name>
        <dbReference type="ChEBI" id="CHEBI:29105"/>
        <label>3</label>
    </ligand>
</feature>
<feature type="binding site" evidence="3">
    <location>
        <position position="634"/>
    </location>
    <ligand>
        <name>Zn(2+)</name>
        <dbReference type="ChEBI" id="CHEBI:29105"/>
        <label>3</label>
    </ligand>
</feature>
<feature type="binding site" evidence="3">
    <location>
        <position position="647"/>
    </location>
    <ligand>
        <name>Zn(2+)</name>
        <dbReference type="ChEBI" id="CHEBI:29105"/>
        <label>3</label>
    </ligand>
</feature>
<feature type="binding site" evidence="3">
    <location>
        <position position="652"/>
    </location>
    <ligand>
        <name>Zn(2+)</name>
        <dbReference type="ChEBI" id="CHEBI:29105"/>
        <label>3</label>
    </ligand>
</feature>
<feature type="binding site" evidence="3">
    <location>
        <position position="767"/>
    </location>
    <ligand>
        <name>Zn(2+)</name>
        <dbReference type="ChEBI" id="CHEBI:29105"/>
        <label>4</label>
    </ligand>
</feature>
<feature type="binding site" evidence="3">
    <location>
        <position position="770"/>
    </location>
    <ligand>
        <name>Zn(2+)</name>
        <dbReference type="ChEBI" id="CHEBI:29105"/>
        <label>4</label>
    </ligand>
</feature>
<feature type="binding site" evidence="3">
    <location>
        <position position="783"/>
    </location>
    <ligand>
        <name>Zn(2+)</name>
        <dbReference type="ChEBI" id="CHEBI:29105"/>
        <label>4</label>
    </ligand>
</feature>
<feature type="binding site" evidence="3">
    <location>
        <position position="788"/>
    </location>
    <ligand>
        <name>Zn(2+)</name>
        <dbReference type="ChEBI" id="CHEBI:29105"/>
        <label>4</label>
    </ligand>
</feature>
<feature type="binding site" evidence="3">
    <location>
        <position position="1031"/>
    </location>
    <ligand>
        <name>Zn(2+)</name>
        <dbReference type="ChEBI" id="CHEBI:29105"/>
        <label>5</label>
    </ligand>
</feature>
<feature type="binding site" evidence="3">
    <location>
        <position position="1034"/>
    </location>
    <ligand>
        <name>Zn(2+)</name>
        <dbReference type="ChEBI" id="CHEBI:29105"/>
        <label>5</label>
    </ligand>
</feature>
<feature type="binding site" evidence="3">
    <location>
        <position position="1047"/>
    </location>
    <ligand>
        <name>Zn(2+)</name>
        <dbReference type="ChEBI" id="CHEBI:29105"/>
        <label>5</label>
    </ligand>
</feature>
<feature type="binding site" evidence="3">
    <location>
        <position position="1052"/>
    </location>
    <ligand>
        <name>Zn(2+)</name>
        <dbReference type="ChEBI" id="CHEBI:29105"/>
        <label>5</label>
    </ligand>
</feature>
<feature type="non-terminal residue">
    <location>
        <position position="1"/>
    </location>
</feature>
<dbReference type="EMBL" id="AF241228">
    <property type="protein sequence ID" value="AAF64473.1"/>
    <property type="molecule type" value="mRNA"/>
</dbReference>
<dbReference type="Xenbase" id="XB-GENE-940295">
    <property type="gene designation" value="zfpm1.L"/>
</dbReference>
<dbReference type="Proteomes" id="UP000186698">
    <property type="component" value="Unplaced"/>
</dbReference>
<dbReference type="GO" id="GO:0005634">
    <property type="term" value="C:nucleus"/>
    <property type="evidence" value="ECO:0000318"/>
    <property type="project" value="GO_Central"/>
</dbReference>
<dbReference type="GO" id="GO:0003677">
    <property type="term" value="F:DNA binding"/>
    <property type="evidence" value="ECO:0007669"/>
    <property type="project" value="UniProtKB-KW"/>
</dbReference>
<dbReference type="GO" id="GO:0061629">
    <property type="term" value="F:RNA polymerase II-specific DNA-binding transcription factor binding"/>
    <property type="evidence" value="ECO:0007669"/>
    <property type="project" value="InterPro"/>
</dbReference>
<dbReference type="GO" id="GO:0008270">
    <property type="term" value="F:zinc ion binding"/>
    <property type="evidence" value="ECO:0007669"/>
    <property type="project" value="UniProtKB-KW"/>
</dbReference>
<dbReference type="GO" id="GO:0009653">
    <property type="term" value="P:anatomical structure morphogenesis"/>
    <property type="evidence" value="ECO:0007669"/>
    <property type="project" value="UniProtKB-ARBA"/>
</dbReference>
<dbReference type="GO" id="GO:0030218">
    <property type="term" value="P:erythrocyte differentiation"/>
    <property type="evidence" value="ECO:0000318"/>
    <property type="project" value="GO_Central"/>
</dbReference>
<dbReference type="GO" id="GO:0007507">
    <property type="term" value="P:heart development"/>
    <property type="evidence" value="ECO:0000318"/>
    <property type="project" value="GO_Central"/>
</dbReference>
<dbReference type="GO" id="GO:0030219">
    <property type="term" value="P:megakaryocyte differentiation"/>
    <property type="evidence" value="ECO:0000318"/>
    <property type="project" value="GO_Central"/>
</dbReference>
<dbReference type="GO" id="GO:0000122">
    <property type="term" value="P:negative regulation of transcription by RNA polymerase II"/>
    <property type="evidence" value="ECO:0000318"/>
    <property type="project" value="GO_Central"/>
</dbReference>
<dbReference type="GO" id="GO:0045944">
    <property type="term" value="P:positive regulation of transcription by RNA polymerase II"/>
    <property type="evidence" value="ECO:0000318"/>
    <property type="project" value="GO_Central"/>
</dbReference>
<dbReference type="CDD" id="cd19215">
    <property type="entry name" value="PR-SET_ZFPM1"/>
    <property type="match status" value="1"/>
</dbReference>
<dbReference type="FunFam" id="3.30.160.60:FF:001079">
    <property type="entry name" value="zinc finger protein ZFPM1 isoform X2"/>
    <property type="match status" value="1"/>
</dbReference>
<dbReference type="FunFam" id="3.30.160.60:FF:000828">
    <property type="entry name" value="Zinc finger protein, FOG family member 1"/>
    <property type="match status" value="1"/>
</dbReference>
<dbReference type="Gene3D" id="3.30.160.60">
    <property type="entry name" value="Classic Zinc Finger"/>
    <property type="match status" value="2"/>
</dbReference>
<dbReference type="InterPro" id="IPR039746">
    <property type="entry name" value="FOG"/>
</dbReference>
<dbReference type="InterPro" id="IPR034731">
    <property type="entry name" value="ZF_CCHC_FOG"/>
</dbReference>
<dbReference type="InterPro" id="IPR049361">
    <property type="entry name" value="ZFPM1/2_PR"/>
</dbReference>
<dbReference type="InterPro" id="IPR036236">
    <property type="entry name" value="Znf_C2H2_sf"/>
</dbReference>
<dbReference type="InterPro" id="IPR013087">
    <property type="entry name" value="Znf_C2H2_type"/>
</dbReference>
<dbReference type="PANTHER" id="PTHR12958">
    <property type="entry name" value="FRIEND OF GATA2-RELATED"/>
    <property type="match status" value="1"/>
</dbReference>
<dbReference type="PANTHER" id="PTHR12958:SF4">
    <property type="entry name" value="ZINC FINGER PROTEIN ZFPM1"/>
    <property type="match status" value="1"/>
</dbReference>
<dbReference type="Pfam" id="PF25445">
    <property type="entry name" value="CCHC_ZFPM2"/>
    <property type="match status" value="1"/>
</dbReference>
<dbReference type="Pfam" id="PF21182">
    <property type="entry name" value="FOG1-like_PR"/>
    <property type="match status" value="1"/>
</dbReference>
<dbReference type="Pfam" id="PF12874">
    <property type="entry name" value="zf-met"/>
    <property type="match status" value="1"/>
</dbReference>
<dbReference type="SMART" id="SM00355">
    <property type="entry name" value="ZnF_C2H2"/>
    <property type="match status" value="10"/>
</dbReference>
<dbReference type="SUPFAM" id="SSF57667">
    <property type="entry name" value="beta-beta-alpha zinc fingers"/>
    <property type="match status" value="6"/>
</dbReference>
<dbReference type="PROSITE" id="PS51810">
    <property type="entry name" value="ZF_CCHC_FOG"/>
    <property type="match status" value="5"/>
</dbReference>
<dbReference type="PROSITE" id="PS00028">
    <property type="entry name" value="ZINC_FINGER_C2H2_1"/>
    <property type="match status" value="3"/>
</dbReference>
<dbReference type="PROSITE" id="PS50157">
    <property type="entry name" value="ZINC_FINGER_C2H2_2"/>
    <property type="match status" value="2"/>
</dbReference>
<protein>
    <recommendedName>
        <fullName>Zinc finger protein ZFPM1</fullName>
    </recommendedName>
    <alternativeName>
        <fullName>Friend of GATA</fullName>
        <shortName>xFOG</shortName>
    </alternativeName>
    <alternativeName>
        <fullName>Friend of GATA protein 1</fullName>
        <shortName>FOG-1</shortName>
    </alternativeName>
</protein>
<gene>
    <name type="primary">zfpm1</name>
    <name type="synonym">fog</name>
    <name type="synonym">fog1</name>
</gene>
<comment type="function">
    <text evidence="5">Transcription regulator that plays an central role in red blood cell differentiation. Essential cofactor that acts via the formation of a heterodimer with transcription factors of the GATA family GATA1 and GATA2. Such heterodimer can both activate or repress transcriptional activity, depending on the cell and promoter context. Acts as a repressor of red blood cells, probably by modulating activity of GATA1.</text>
</comment>
<comment type="subunit">
    <text evidence="5">Interacts with corepressor CTBP. Interacts with the N-terminal zinc-finger of GATA1 and probably GATA2.</text>
</comment>
<comment type="subcellular location">
    <subcellularLocation>
        <location evidence="1">Nucleus</location>
    </subcellularLocation>
</comment>
<comment type="tissue specificity">
    <text evidence="5">Predominantly expressed in heart and brain. Also expressed in ventral blood island and adult spleen.</text>
</comment>
<comment type="domain">
    <text evidence="1">Some of the CCHC FOG-type zinc fingers probably directly bind to GATA-type zinc fingers. The Tyr residue adjacent to the last Cys of the CCHC FOG-type zinc finger is probably essential for the interaction with GATA-type zinc fingers (By similarity).</text>
</comment>
<comment type="similarity">
    <text evidence="3">Belongs to the FOG (Friend of GATA) family.</text>
</comment>
<organism>
    <name type="scientific">Xenopus laevis</name>
    <name type="common">African clawed frog</name>
    <dbReference type="NCBI Taxonomy" id="8355"/>
    <lineage>
        <taxon>Eukaryota</taxon>
        <taxon>Metazoa</taxon>
        <taxon>Chordata</taxon>
        <taxon>Craniata</taxon>
        <taxon>Vertebrata</taxon>
        <taxon>Euteleostomi</taxon>
        <taxon>Amphibia</taxon>
        <taxon>Batrachia</taxon>
        <taxon>Anura</taxon>
        <taxon>Pipoidea</taxon>
        <taxon>Pipidae</taxon>
        <taxon>Xenopodinae</taxon>
        <taxon>Xenopus</taxon>
        <taxon>Xenopus</taxon>
    </lineage>
</organism>
<proteinExistence type="evidence at protein level"/>
<reference key="1">
    <citation type="journal article" date="2000" name="Development">
        <title>FOG acts as a repressor of red blood cell development in Xenopus.</title>
        <authorList>
            <person name="Deconinck A.E."/>
            <person name="Mead P.E."/>
            <person name="Tevosian S.G."/>
            <person name="Crispino J.D."/>
            <person name="Katz S.G."/>
            <person name="Zon L.I."/>
            <person name="Orkin S.H."/>
        </authorList>
    </citation>
    <scope>NUCLEOTIDE SEQUENCE [MRNA]</scope>
    <scope>FUNCTION</scope>
    <scope>TISSUE SPECIFICITY</scope>
    <scope>INTERACTION WITH CTBP</scope>
    <source>
        <tissue>Spleen</tissue>
    </source>
</reference>
<sequence length="1061" mass="114181">WNGPDELELEISSTDGVGHIRARNQLHKGFSWGPYKGNFTGSSSSPGPADLNISPSWDVDGDCWLKYVTLVSCEAEANAVLYRKGDLIWCKTSQIVEQDEVIQAFLKAEPQAIPNYTIKEEPGETSQCTSTLPEFQLLPQQAGMAAILATAVVNKDVFPCKDCGIWYRSERNLQAHLMYYCASRQSSTSPSMEEKAKDSYPNERICPFPQCKKSCPSTSSLEIHMRSHSGERPFVCLICLSAFTTKANCERHLKVHTDTLNGVCHGCGFISTTRDILYSHLVTNHMICQPGSKVDVYPVVKAVPAVKSSNPVVSQIASSSLLKCGLCGFLAEDFQVFNHALLHTTNPVPSATHSVKSPPENINEKQNPESQENGNAKSPISSSSSASSRSEETPLKLYIKQEPEGQLSISEAGSTTCEAKDGVALVQSPAIKVKTEMSSPTPGSSPVPNETGAATGGGTVIIPHYVFGHEATAAIVPQASEILAKMSELVHSRLKQGQAVTPAGFSGSAVPKGATCFECEITFNNINNYYVHKRLYCSGRHVSDENSSSARKVKALPARTALASGFSSTEQEASPPQEDAGEESSAPVVAVKLEENSGMDCEGAGSGHVSEGSQSPSSLDDPEEDPNRTVCGACNIRFSRHETYVVHKRYYCASRHDPPLRRREVNKPGPPYTTQPTPRTRKRRKLYEIHGVAPTESTPPSPHTLGRVEAMALMPGLIPAPVMPSPSSSPDAVDGPIDLSKKPRLVAEAPVPSAAATVAPLADYHECTACRISFNSLESYLAHKKFSCPTAPLQQKTIQQLQKVKSPSSATGKLVDDTVKVKVESKAALSPGSVSDTIQPLALPFSTISDPKQLQQYSSVTEASLSATTTCPYCPHNVIIRGDLLEHFRSVHGLILAKPTAGHRLQTTIMEVLVPARGQTSSASENSLPSPPVSSASPLQLPGLRRENSNYKDTTSSSSSVNGSPILTSTPRPLLPTSPAPPSNSLPLAESRREDGLPRVPSQVLLPGDKAMQPPKPSLISPVPNGNHRYCRLCNIKFSSLSTFIAHKKYYCSSHAAEHVK</sequence>
<evidence type="ECO:0000250" key="1"/>
<evidence type="ECO:0000255" key="2">
    <source>
        <dbReference type="PROSITE-ProRule" id="PRU00042"/>
    </source>
</evidence>
<evidence type="ECO:0000255" key="3">
    <source>
        <dbReference type="PROSITE-ProRule" id="PRU01153"/>
    </source>
</evidence>
<evidence type="ECO:0000256" key="4">
    <source>
        <dbReference type="SAM" id="MobiDB-lite"/>
    </source>
</evidence>
<evidence type="ECO:0000269" key="5">
    <source>
    </source>
</evidence>